<name>LYTS_STAAM</name>
<protein>
    <recommendedName>
        <fullName>Sensor histidine kinase/phosphatase LytS</fullName>
        <ecNumber evidence="4">2.7.13.3</ecNumber>
        <ecNumber evidence="4">3.1.3.-</ecNumber>
    </recommendedName>
    <alternativeName>
        <fullName>Autolysin sensor kinase</fullName>
    </alternativeName>
</protein>
<feature type="chain" id="PRO_0000074793" description="Sensor histidine kinase/phosphatase LytS">
    <location>
        <begin position="1"/>
        <end position="584"/>
    </location>
</feature>
<feature type="transmembrane region" description="Helical" evidence="3">
    <location>
        <begin position="6"/>
        <end position="28"/>
    </location>
</feature>
<feature type="transmembrane region" description="Helical" evidence="3">
    <location>
        <begin position="40"/>
        <end position="62"/>
    </location>
</feature>
<feature type="transmembrane region" description="Helical" evidence="3">
    <location>
        <begin position="88"/>
        <end position="110"/>
    </location>
</feature>
<feature type="transmembrane region" description="Helical" evidence="3">
    <location>
        <begin position="123"/>
        <end position="140"/>
    </location>
</feature>
<feature type="transmembrane region" description="Helical" evidence="3">
    <location>
        <begin position="155"/>
        <end position="172"/>
    </location>
</feature>
<feature type="transmembrane region" description="Helical" evidence="3">
    <location>
        <begin position="184"/>
        <end position="206"/>
    </location>
</feature>
<feature type="domain" description="GAF">
    <location>
        <begin position="311"/>
        <end position="362"/>
    </location>
</feature>
<feature type="domain" description="Histidine kinase">
    <location>
        <begin position="363"/>
        <end position="580"/>
    </location>
</feature>
<feature type="modified residue" description="Phosphohistidine; by autocatalysis" evidence="1">
    <location>
        <position position="390"/>
    </location>
</feature>
<gene>
    <name type="primary">lytS</name>
    <name type="ordered locus">SAV0260</name>
</gene>
<accession>P60612</accession>
<accession>Q99WW3</accession>
<dbReference type="EC" id="2.7.13.3" evidence="4"/>
<dbReference type="EC" id="3.1.3.-" evidence="4"/>
<dbReference type="EMBL" id="BA000017">
    <property type="protein sequence ID" value="BAB56422.1"/>
    <property type="molecule type" value="Genomic_DNA"/>
</dbReference>
<dbReference type="RefSeq" id="WP_000950281.1">
    <property type="nucleotide sequence ID" value="NC_002758.2"/>
</dbReference>
<dbReference type="SMR" id="P60612"/>
<dbReference type="KEGG" id="sav:SAV0260"/>
<dbReference type="HOGENOM" id="CLU_020473_3_3_9"/>
<dbReference type="PhylomeDB" id="P60612"/>
<dbReference type="Proteomes" id="UP000002481">
    <property type="component" value="Chromosome"/>
</dbReference>
<dbReference type="GO" id="GO:0005886">
    <property type="term" value="C:plasma membrane"/>
    <property type="evidence" value="ECO:0007669"/>
    <property type="project" value="UniProtKB-SubCell"/>
</dbReference>
<dbReference type="GO" id="GO:0005524">
    <property type="term" value="F:ATP binding"/>
    <property type="evidence" value="ECO:0007669"/>
    <property type="project" value="UniProtKB-KW"/>
</dbReference>
<dbReference type="GO" id="GO:0016787">
    <property type="term" value="F:hydrolase activity"/>
    <property type="evidence" value="ECO:0007669"/>
    <property type="project" value="UniProtKB-KW"/>
</dbReference>
<dbReference type="GO" id="GO:0000155">
    <property type="term" value="F:phosphorelay sensor kinase activity"/>
    <property type="evidence" value="ECO:0007669"/>
    <property type="project" value="InterPro"/>
</dbReference>
<dbReference type="GO" id="GO:0071555">
    <property type="term" value="P:cell wall organization"/>
    <property type="evidence" value="ECO:0007669"/>
    <property type="project" value="InterPro"/>
</dbReference>
<dbReference type="CDD" id="cd16957">
    <property type="entry name" value="HATPase_LytS-like"/>
    <property type="match status" value="1"/>
</dbReference>
<dbReference type="Gene3D" id="1.10.1760.20">
    <property type="match status" value="1"/>
</dbReference>
<dbReference type="Gene3D" id="3.30.450.40">
    <property type="match status" value="1"/>
</dbReference>
<dbReference type="Gene3D" id="3.30.565.10">
    <property type="entry name" value="Histidine kinase-like ATPase, C-terminal domain"/>
    <property type="match status" value="1"/>
</dbReference>
<dbReference type="InterPro" id="IPR050640">
    <property type="entry name" value="Bact_2-comp_sensor_kinase"/>
</dbReference>
<dbReference type="InterPro" id="IPR003018">
    <property type="entry name" value="GAF"/>
</dbReference>
<dbReference type="InterPro" id="IPR029016">
    <property type="entry name" value="GAF-like_dom_sf"/>
</dbReference>
<dbReference type="InterPro" id="IPR036890">
    <property type="entry name" value="HATPase_C_sf"/>
</dbReference>
<dbReference type="InterPro" id="IPR010559">
    <property type="entry name" value="Sig_transdc_His_kin_internal"/>
</dbReference>
<dbReference type="InterPro" id="IPR011620">
    <property type="entry name" value="Sig_transdc_His_kinase_LytS_TM"/>
</dbReference>
<dbReference type="PANTHER" id="PTHR34220">
    <property type="entry name" value="SENSOR HISTIDINE KINASE YPDA"/>
    <property type="match status" value="1"/>
</dbReference>
<dbReference type="PANTHER" id="PTHR34220:SF7">
    <property type="entry name" value="SENSOR HISTIDINE KINASE YPDA"/>
    <property type="match status" value="1"/>
</dbReference>
<dbReference type="Pfam" id="PF07694">
    <property type="entry name" value="5TM-5TMR_LYT"/>
    <property type="match status" value="1"/>
</dbReference>
<dbReference type="Pfam" id="PF02518">
    <property type="entry name" value="HATPase_c"/>
    <property type="match status" value="1"/>
</dbReference>
<dbReference type="Pfam" id="PF06580">
    <property type="entry name" value="His_kinase"/>
    <property type="match status" value="1"/>
</dbReference>
<dbReference type="SMART" id="SM00065">
    <property type="entry name" value="GAF"/>
    <property type="match status" value="1"/>
</dbReference>
<dbReference type="SMART" id="SM00387">
    <property type="entry name" value="HATPase_c"/>
    <property type="match status" value="1"/>
</dbReference>
<dbReference type="SUPFAM" id="SSF55874">
    <property type="entry name" value="ATPase domain of HSP90 chaperone/DNA topoisomerase II/histidine kinase"/>
    <property type="match status" value="1"/>
</dbReference>
<dbReference type="SUPFAM" id="SSF55781">
    <property type="entry name" value="GAF domain-like"/>
    <property type="match status" value="1"/>
</dbReference>
<keyword id="KW-0067">ATP-binding</keyword>
<keyword id="KW-1003">Cell membrane</keyword>
<keyword id="KW-0378">Hydrolase</keyword>
<keyword id="KW-0418">Kinase</keyword>
<keyword id="KW-0472">Membrane</keyword>
<keyword id="KW-0547">Nucleotide-binding</keyword>
<keyword id="KW-0597">Phosphoprotein</keyword>
<keyword id="KW-0808">Transferase</keyword>
<keyword id="KW-0812">Transmembrane</keyword>
<keyword id="KW-1133">Transmembrane helix</keyword>
<keyword id="KW-0902">Two-component regulatory system</keyword>
<reference key="1">
    <citation type="journal article" date="2001" name="Lancet">
        <title>Whole genome sequencing of meticillin-resistant Staphylococcus aureus.</title>
        <authorList>
            <person name="Kuroda M."/>
            <person name="Ohta T."/>
            <person name="Uchiyama I."/>
            <person name="Baba T."/>
            <person name="Yuzawa H."/>
            <person name="Kobayashi I."/>
            <person name="Cui L."/>
            <person name="Oguchi A."/>
            <person name="Aoki K."/>
            <person name="Nagai Y."/>
            <person name="Lian J.-Q."/>
            <person name="Ito T."/>
            <person name="Kanamori M."/>
            <person name="Matsumaru H."/>
            <person name="Maruyama A."/>
            <person name="Murakami H."/>
            <person name="Hosoyama A."/>
            <person name="Mizutani-Ui Y."/>
            <person name="Takahashi N.K."/>
            <person name="Sawano T."/>
            <person name="Inoue R."/>
            <person name="Kaito C."/>
            <person name="Sekimizu K."/>
            <person name="Hirakawa H."/>
            <person name="Kuhara S."/>
            <person name="Goto S."/>
            <person name="Yabuzaki J."/>
            <person name="Kanehisa M."/>
            <person name="Yamashita A."/>
            <person name="Oshima K."/>
            <person name="Furuya K."/>
            <person name="Yoshino C."/>
            <person name="Shiba T."/>
            <person name="Hattori M."/>
            <person name="Ogasawara N."/>
            <person name="Hayashi H."/>
            <person name="Hiramatsu K."/>
        </authorList>
    </citation>
    <scope>NUCLEOTIDE SEQUENCE [LARGE SCALE GENOMIC DNA]</scope>
    <source>
        <strain>Mu50 / ATCC 700699</strain>
    </source>
</reference>
<reference key="2">
    <citation type="journal article" date="2015" name="F1000Research">
        <title>Signaling mechanism by the Staphylococcus aureus two-component system LytSR: role of acetyl phosphate in bypassing the cell membrane electrical potential sensor LytS.</title>
        <authorList>
            <person name="Patel K."/>
            <person name="Golemi-Kotra D."/>
        </authorList>
    </citation>
    <scope>FUNCTION</scope>
    <scope>CATALYTIC ACTIVITY</scope>
    <scope>AUTOPHOSPHORYLATION</scope>
</reference>
<comment type="function">
    <text evidence="2 4">Member of the two-component regulatory system LytR/LytS that regulates genes involved in autolysis, programmed cell death, biofilm formation and cell wall metabolism (By similarity). Also participates in sensing and responding to host defense cationic antimicrobial peptides (HDPs) (By similarity). Functions as a sensor protein kinase which is autophosphorylated at a histidine residue and transfers its phosphate group to the conserved aspartic acid residue in the regulatory domain of LytR (PubMed:27127614). In turn, LytR binds to the upstream promoter regions of target genes including lrgA and lrgB, to positively regulate their expression (PubMed:27127614). Also possesses a phosphatase activity that dephosphorylates and thus inactivates LytR (PubMed:27127614).</text>
</comment>
<comment type="catalytic activity">
    <reaction evidence="4">
        <text>ATP + protein L-histidine = ADP + protein N-phospho-L-histidine.</text>
        <dbReference type="EC" id="2.7.13.3"/>
    </reaction>
</comment>
<comment type="subcellular location">
    <subcellularLocation>
        <location evidence="1">Cell membrane</location>
        <topology evidence="1">Multi-pass membrane protein</topology>
    </subcellularLocation>
</comment>
<comment type="PTM">
    <text evidence="2">Autophosphorylated on His-390.</text>
</comment>
<evidence type="ECO:0000250" key="1"/>
<evidence type="ECO:0000250" key="2">
    <source>
        <dbReference type="UniProtKB" id="Q53705"/>
    </source>
</evidence>
<evidence type="ECO:0000255" key="3"/>
<evidence type="ECO:0000269" key="4">
    <source>
    </source>
</evidence>
<proteinExistence type="evidence at protein level"/>
<sequence length="584" mass="65029">MLSLTMLLLERVGLIIILAYVLMNIPYFKNLMNRRRTWKARWQLCIIFSLFALMSNLTGIVIDHQHSLSGSVYFRLDDDVSLANTRVLTIGVAGLVGGPFVGLFVGVISGIFRVYMGGADAQVYLISSIFIGIIAGYFGLQAQRRKRYPSIAKSAMIGIVMEMIQMLSILTFSHDKAYAVDLISLIALPMIIVNSVGTAIFMSIIISTLKQEEQMKAVQTHDVLQLMNQTLPYFKEGLNRESAQQIAMIIKNLMKVSAVAITSKNEILSHVGAGSDHHIPTNEILTSLSKDVLKSGKLKEVHTKEEIGCSHPNCPLRAAIVIPLEMHGSIVGTLKMYFTNPNDLTFVERQLAEGLANIFSSQIELGEAETQSKLLKDAEIKSLQAQVSPHFFFNSINTISALVRINSEKARELLLELSYFFRANLQGSKQHTITLDKELSQVRAYLSLEQARYPGRFNININVEDKYRDVLVPPFLIQILVENAIKHAFTNRKQGNDIDVSVIKETATHVRIIVQDNGQGISKDKMHLLGETSVESESGTGSALENLNLRLKGLFGKSAALQFESTSSGTTFWCVLPYERQEEE</sequence>
<organism>
    <name type="scientific">Staphylococcus aureus (strain Mu50 / ATCC 700699)</name>
    <dbReference type="NCBI Taxonomy" id="158878"/>
    <lineage>
        <taxon>Bacteria</taxon>
        <taxon>Bacillati</taxon>
        <taxon>Bacillota</taxon>
        <taxon>Bacilli</taxon>
        <taxon>Bacillales</taxon>
        <taxon>Staphylococcaceae</taxon>
        <taxon>Staphylococcus</taxon>
    </lineage>
</organism>